<comment type="function">
    <text evidence="1">Catalyzes the condensation of (S)-aspartate-beta-semialdehyde [(S)-ASA] and pyruvate to 4-hydroxy-tetrahydrodipicolinate (HTPA).</text>
</comment>
<comment type="catalytic activity">
    <reaction evidence="1">
        <text>L-aspartate 4-semialdehyde + pyruvate = (2S,4S)-4-hydroxy-2,3,4,5-tetrahydrodipicolinate + H2O + H(+)</text>
        <dbReference type="Rhea" id="RHEA:34171"/>
        <dbReference type="ChEBI" id="CHEBI:15361"/>
        <dbReference type="ChEBI" id="CHEBI:15377"/>
        <dbReference type="ChEBI" id="CHEBI:15378"/>
        <dbReference type="ChEBI" id="CHEBI:67139"/>
        <dbReference type="ChEBI" id="CHEBI:537519"/>
        <dbReference type="EC" id="4.3.3.7"/>
    </reaction>
</comment>
<comment type="pathway">
    <text evidence="1">Amino-acid biosynthesis; L-lysine biosynthesis via DAP pathway; (S)-tetrahydrodipicolinate from L-aspartate: step 3/4.</text>
</comment>
<comment type="subunit">
    <text evidence="1">Homotetramer; dimer of dimers.</text>
</comment>
<comment type="subcellular location">
    <subcellularLocation>
        <location evidence="1">Cytoplasm</location>
    </subcellularLocation>
</comment>
<comment type="similarity">
    <text evidence="1">Belongs to the DapA family.</text>
</comment>
<comment type="caution">
    <text evidence="2">Was originally thought to be a dihydrodipicolinate synthase (DHDPS), catalyzing the condensation of (S)-aspartate-beta-semialdehyde [(S)-ASA] and pyruvate to dihydrodipicolinate (DHDP). However, it was shown in E.coli that the product of the enzymatic reaction is not dihydrodipicolinate but in fact (4S)-4-hydroxy-2,3,4,5-tetrahydro-(2S)-dipicolinic acid (HTPA), and that the consecutive dehydration reaction leading to DHDP is not spontaneous but catalyzed by DapB.</text>
</comment>
<feature type="chain" id="PRO_1000080521" description="4-hydroxy-tetrahydrodipicolinate synthase">
    <location>
        <begin position="1"/>
        <end position="295"/>
    </location>
</feature>
<feature type="active site" description="Proton donor/acceptor" evidence="1">
    <location>
        <position position="134"/>
    </location>
</feature>
<feature type="active site" description="Schiff-base intermediate with substrate" evidence="1">
    <location>
        <position position="162"/>
    </location>
</feature>
<feature type="binding site" evidence="1">
    <location>
        <position position="46"/>
    </location>
    <ligand>
        <name>pyruvate</name>
        <dbReference type="ChEBI" id="CHEBI:15361"/>
    </ligand>
</feature>
<feature type="binding site" evidence="1">
    <location>
        <position position="205"/>
    </location>
    <ligand>
        <name>pyruvate</name>
        <dbReference type="ChEBI" id="CHEBI:15361"/>
    </ligand>
</feature>
<feature type="site" description="Part of a proton relay during catalysis" evidence="1">
    <location>
        <position position="45"/>
    </location>
</feature>
<feature type="site" description="Part of a proton relay during catalysis" evidence="1">
    <location>
        <position position="108"/>
    </location>
</feature>
<accession>Q2IGX5</accession>
<protein>
    <recommendedName>
        <fullName evidence="1">4-hydroxy-tetrahydrodipicolinate synthase</fullName>
        <shortName evidence="1">HTPA synthase</shortName>
        <ecNumber evidence="1">4.3.3.7</ecNumber>
    </recommendedName>
</protein>
<sequence>MRRLEGSMVAIVTPMKDGAVDLRALRELTEWQLAEGTDGIVPCGTTGEGVTLTPAERADVIRTVIETVRGRALVIAGAGSNATHEAIESVKLAKSLGADAALVVTPYYNKPTQEGLFRHYQAIWEATRFPVVAYNVPSRTSVDLLPETVARLAKAGAIAGIKEATANMDRQVQLVEKVGKDAIAYLSGDDFTVLPYIACGGHGVISVIANVAPRAMKELVVAARSGDLAGALAKQAAMAELNRMMFVETNPGPVKAAVALLGRAGGELRLPLAPVSEASLAKVREAMVRFGLKLA</sequence>
<dbReference type="EC" id="4.3.3.7" evidence="1"/>
<dbReference type="EMBL" id="CP000251">
    <property type="protein sequence ID" value="ABC83833.1"/>
    <property type="molecule type" value="Genomic_DNA"/>
</dbReference>
<dbReference type="RefSeq" id="WP_011423115.1">
    <property type="nucleotide sequence ID" value="NC_007760.1"/>
</dbReference>
<dbReference type="SMR" id="Q2IGX5"/>
<dbReference type="STRING" id="290397.Adeh_4069"/>
<dbReference type="KEGG" id="ade:Adeh_4069"/>
<dbReference type="eggNOG" id="COG0329">
    <property type="taxonomic scope" value="Bacteria"/>
</dbReference>
<dbReference type="HOGENOM" id="CLU_049343_7_1_7"/>
<dbReference type="OrthoDB" id="9782828at2"/>
<dbReference type="UniPathway" id="UPA00034">
    <property type="reaction ID" value="UER00017"/>
</dbReference>
<dbReference type="Proteomes" id="UP000001935">
    <property type="component" value="Chromosome"/>
</dbReference>
<dbReference type="GO" id="GO:0005829">
    <property type="term" value="C:cytosol"/>
    <property type="evidence" value="ECO:0007669"/>
    <property type="project" value="TreeGrafter"/>
</dbReference>
<dbReference type="GO" id="GO:0008840">
    <property type="term" value="F:4-hydroxy-tetrahydrodipicolinate synthase activity"/>
    <property type="evidence" value="ECO:0007669"/>
    <property type="project" value="UniProtKB-UniRule"/>
</dbReference>
<dbReference type="GO" id="GO:0019877">
    <property type="term" value="P:diaminopimelate biosynthetic process"/>
    <property type="evidence" value="ECO:0007669"/>
    <property type="project" value="UniProtKB-UniRule"/>
</dbReference>
<dbReference type="GO" id="GO:0009089">
    <property type="term" value="P:lysine biosynthetic process via diaminopimelate"/>
    <property type="evidence" value="ECO:0007669"/>
    <property type="project" value="UniProtKB-UniRule"/>
</dbReference>
<dbReference type="CDD" id="cd00950">
    <property type="entry name" value="DHDPS"/>
    <property type="match status" value="1"/>
</dbReference>
<dbReference type="Gene3D" id="3.20.20.70">
    <property type="entry name" value="Aldolase class I"/>
    <property type="match status" value="1"/>
</dbReference>
<dbReference type="HAMAP" id="MF_00418">
    <property type="entry name" value="DapA"/>
    <property type="match status" value="1"/>
</dbReference>
<dbReference type="InterPro" id="IPR013785">
    <property type="entry name" value="Aldolase_TIM"/>
</dbReference>
<dbReference type="InterPro" id="IPR005263">
    <property type="entry name" value="DapA"/>
</dbReference>
<dbReference type="InterPro" id="IPR002220">
    <property type="entry name" value="DapA-like"/>
</dbReference>
<dbReference type="InterPro" id="IPR020625">
    <property type="entry name" value="Schiff_base-form_aldolases_AS"/>
</dbReference>
<dbReference type="InterPro" id="IPR020624">
    <property type="entry name" value="Schiff_base-form_aldolases_CS"/>
</dbReference>
<dbReference type="NCBIfam" id="TIGR00674">
    <property type="entry name" value="dapA"/>
    <property type="match status" value="1"/>
</dbReference>
<dbReference type="PANTHER" id="PTHR12128:SF66">
    <property type="entry name" value="4-HYDROXY-2-OXOGLUTARATE ALDOLASE, MITOCHONDRIAL"/>
    <property type="match status" value="1"/>
</dbReference>
<dbReference type="PANTHER" id="PTHR12128">
    <property type="entry name" value="DIHYDRODIPICOLINATE SYNTHASE"/>
    <property type="match status" value="1"/>
</dbReference>
<dbReference type="Pfam" id="PF00701">
    <property type="entry name" value="DHDPS"/>
    <property type="match status" value="1"/>
</dbReference>
<dbReference type="PIRSF" id="PIRSF001365">
    <property type="entry name" value="DHDPS"/>
    <property type="match status" value="1"/>
</dbReference>
<dbReference type="PRINTS" id="PR00146">
    <property type="entry name" value="DHPICSNTHASE"/>
</dbReference>
<dbReference type="SMART" id="SM01130">
    <property type="entry name" value="DHDPS"/>
    <property type="match status" value="1"/>
</dbReference>
<dbReference type="SUPFAM" id="SSF51569">
    <property type="entry name" value="Aldolase"/>
    <property type="match status" value="1"/>
</dbReference>
<dbReference type="PROSITE" id="PS00665">
    <property type="entry name" value="DHDPS_1"/>
    <property type="match status" value="1"/>
</dbReference>
<dbReference type="PROSITE" id="PS00666">
    <property type="entry name" value="DHDPS_2"/>
    <property type="match status" value="1"/>
</dbReference>
<keyword id="KW-0028">Amino-acid biosynthesis</keyword>
<keyword id="KW-0963">Cytoplasm</keyword>
<keyword id="KW-0220">Diaminopimelate biosynthesis</keyword>
<keyword id="KW-0456">Lyase</keyword>
<keyword id="KW-0457">Lysine biosynthesis</keyword>
<keyword id="KW-1185">Reference proteome</keyword>
<keyword id="KW-0704">Schiff base</keyword>
<organism>
    <name type="scientific">Anaeromyxobacter dehalogenans (strain 2CP-C)</name>
    <dbReference type="NCBI Taxonomy" id="290397"/>
    <lineage>
        <taxon>Bacteria</taxon>
        <taxon>Pseudomonadati</taxon>
        <taxon>Myxococcota</taxon>
        <taxon>Myxococcia</taxon>
        <taxon>Myxococcales</taxon>
        <taxon>Cystobacterineae</taxon>
        <taxon>Anaeromyxobacteraceae</taxon>
        <taxon>Anaeromyxobacter</taxon>
    </lineage>
</organism>
<evidence type="ECO:0000255" key="1">
    <source>
        <dbReference type="HAMAP-Rule" id="MF_00418"/>
    </source>
</evidence>
<evidence type="ECO:0000305" key="2"/>
<proteinExistence type="inferred from homology"/>
<reference key="1">
    <citation type="submission" date="2006-01" db="EMBL/GenBank/DDBJ databases">
        <title>Complete sequence of Anaeromyxobacter dehalogenans 2CP-C.</title>
        <authorList>
            <person name="Copeland A."/>
            <person name="Lucas S."/>
            <person name="Lapidus A."/>
            <person name="Barry K."/>
            <person name="Detter J.C."/>
            <person name="Glavina T."/>
            <person name="Hammon N."/>
            <person name="Israni S."/>
            <person name="Pitluck S."/>
            <person name="Brettin T."/>
            <person name="Bruce D."/>
            <person name="Han C."/>
            <person name="Tapia R."/>
            <person name="Gilna P."/>
            <person name="Kiss H."/>
            <person name="Schmutz J."/>
            <person name="Larimer F."/>
            <person name="Land M."/>
            <person name="Kyrpides N."/>
            <person name="Anderson I."/>
            <person name="Sanford R.A."/>
            <person name="Ritalahti K.M."/>
            <person name="Thomas H.S."/>
            <person name="Kirby J.R."/>
            <person name="Zhulin I.B."/>
            <person name="Loeffler F.E."/>
            <person name="Richardson P."/>
        </authorList>
    </citation>
    <scope>NUCLEOTIDE SEQUENCE [LARGE SCALE GENOMIC DNA]</scope>
    <source>
        <strain>2CP-C</strain>
    </source>
</reference>
<gene>
    <name evidence="1" type="primary">dapA</name>
    <name type="ordered locus">Adeh_4069</name>
</gene>
<name>DAPA_ANADE</name>